<comment type="function">
    <text evidence="1">Involved in protein synthesis. Involved in microtubule stabilization.</text>
</comment>
<comment type="subcellular location">
    <subcellularLocation>
        <location evidence="1">Cytoplasm</location>
        <location evidence="1">Cytoskeleton</location>
    </subcellularLocation>
</comment>
<comment type="allergen">
    <text evidence="3">Causes an allergic reaction in human. Binds to IgE in approximately 4% of patients tested allergic to A.alternata.</text>
</comment>
<comment type="similarity">
    <text evidence="2">Belongs to the TCTP family.</text>
</comment>
<feature type="chain" id="PRO_0000446896" description="Translationally-controlled tumor protein homolog">
    <location>
        <begin position="1"/>
        <end position="169"/>
    </location>
</feature>
<feature type="domain" description="TCTP" evidence="2">
    <location>
        <begin position="1"/>
        <end position="169"/>
    </location>
</feature>
<organism evidence="6">
    <name type="scientific">Alternaria alternata</name>
    <name type="common">Alternaria rot fungus</name>
    <name type="synonym">Torula alternata</name>
    <dbReference type="NCBI Taxonomy" id="5599"/>
    <lineage>
        <taxon>Eukaryota</taxon>
        <taxon>Fungi</taxon>
        <taxon>Dikarya</taxon>
        <taxon>Ascomycota</taxon>
        <taxon>Pezizomycotina</taxon>
        <taxon>Dothideomycetes</taxon>
        <taxon>Pleosporomycetidae</taxon>
        <taxon>Pleosporales</taxon>
        <taxon>Pleosporineae</taxon>
        <taxon>Pleosporaceae</taxon>
        <taxon>Alternaria</taxon>
        <taxon>Alternaria sect. Alternaria</taxon>
        <taxon>Alternaria alternata complex</taxon>
    </lineage>
</organism>
<protein>
    <recommendedName>
        <fullName evidence="5">Translationally-controlled tumor protein homolog</fullName>
        <shortName evidence="4 6">TCTP</shortName>
    </recommendedName>
    <allergenName evidence="5">Alt a TCTP</allergenName>
</protein>
<name>TCTP_ALTAL</name>
<sequence length="169" mass="18889">MLIYKDILTGDEIISDSYNLKEIDGVVYEADCTKITVGGESFDTGANASAEEQEEGAEDSAETKIDVVYSFRLNETGFDKKGYLTYLKGYMKAVKDGLKKKGADEATIKDFETKASGYAKKIISNFKDYEFFTGESMNPDGMIVLLNYREDGVTPYVTVWKHGLEEMKV</sequence>
<evidence type="ECO:0000250" key="1">
    <source>
        <dbReference type="UniProtKB" id="P35691"/>
    </source>
</evidence>
<evidence type="ECO:0000255" key="2">
    <source>
        <dbReference type="PROSITE-ProRule" id="PRU01133"/>
    </source>
</evidence>
<evidence type="ECO:0000269" key="3">
    <source>
    </source>
</evidence>
<evidence type="ECO:0000303" key="4">
    <source>
    </source>
</evidence>
<evidence type="ECO:0000305" key="5"/>
<evidence type="ECO:0000312" key="6">
    <source>
        <dbReference type="EMBL" id="ABI26088.1"/>
    </source>
</evidence>
<proteinExistence type="evidence at protein level"/>
<accession>D0MQ50</accession>
<dbReference type="EMBL" id="DQ837161">
    <property type="protein sequence ID" value="ABI26088.1"/>
    <property type="molecule type" value="mRNA"/>
</dbReference>
<dbReference type="SMR" id="D0MQ50"/>
<dbReference type="Allergome" id="8237">
    <property type="allergen name" value="Alt a TCTP"/>
</dbReference>
<dbReference type="VEuPathDB" id="FungiDB:CC77DRAFT_1005982"/>
<dbReference type="GO" id="GO:0005829">
    <property type="term" value="C:cytosol"/>
    <property type="evidence" value="ECO:0000250"/>
    <property type="project" value="UniProtKB"/>
</dbReference>
<dbReference type="GO" id="GO:0005874">
    <property type="term" value="C:microtubule"/>
    <property type="evidence" value="ECO:0007669"/>
    <property type="project" value="UniProtKB-KW"/>
</dbReference>
<dbReference type="GO" id="GO:0005509">
    <property type="term" value="F:calcium ion binding"/>
    <property type="evidence" value="ECO:0007669"/>
    <property type="project" value="TreeGrafter"/>
</dbReference>
<dbReference type="GO" id="GO:0002181">
    <property type="term" value="P:cytoplasmic translation"/>
    <property type="evidence" value="ECO:0000250"/>
    <property type="project" value="UniProtKB"/>
</dbReference>
<dbReference type="GO" id="GO:0007026">
    <property type="term" value="P:negative regulation of microtubule depolymerization"/>
    <property type="evidence" value="ECO:0000250"/>
    <property type="project" value="UniProtKB"/>
</dbReference>
<dbReference type="FunFam" id="2.170.150.10:FF:000002">
    <property type="entry name" value="Translationally-controlled tumor protein homolog"/>
    <property type="match status" value="1"/>
</dbReference>
<dbReference type="Gene3D" id="2.170.150.10">
    <property type="entry name" value="Metal Binding Protein, Guanine Nucleotide Exchange Factor, Chain A"/>
    <property type="match status" value="1"/>
</dbReference>
<dbReference type="InterPro" id="IPR011057">
    <property type="entry name" value="Mss4-like_sf"/>
</dbReference>
<dbReference type="InterPro" id="IPR011323">
    <property type="entry name" value="Mss4/transl-control_tumour"/>
</dbReference>
<dbReference type="InterPro" id="IPR034737">
    <property type="entry name" value="TCTP"/>
</dbReference>
<dbReference type="InterPro" id="IPR018103">
    <property type="entry name" value="Translation_control_tumour_CS"/>
</dbReference>
<dbReference type="InterPro" id="IPR018105">
    <property type="entry name" value="Translational_control_tumour_p"/>
</dbReference>
<dbReference type="PANTHER" id="PTHR11991">
    <property type="entry name" value="TRANSLATIONALLY CONTROLLED TUMOR PROTEIN-RELATED"/>
    <property type="match status" value="1"/>
</dbReference>
<dbReference type="PANTHER" id="PTHR11991:SF0">
    <property type="entry name" value="TRANSLATIONALLY-CONTROLLED TUMOR PROTEIN"/>
    <property type="match status" value="1"/>
</dbReference>
<dbReference type="Pfam" id="PF00838">
    <property type="entry name" value="TCTP"/>
    <property type="match status" value="1"/>
</dbReference>
<dbReference type="PRINTS" id="PR01653">
    <property type="entry name" value="TCTPROTEIN"/>
</dbReference>
<dbReference type="SUPFAM" id="SSF51316">
    <property type="entry name" value="Mss4-like"/>
    <property type="match status" value="1"/>
</dbReference>
<dbReference type="PROSITE" id="PS01003">
    <property type="entry name" value="TCTP_2"/>
    <property type="match status" value="1"/>
</dbReference>
<dbReference type="PROSITE" id="PS51797">
    <property type="entry name" value="TCTP_3"/>
    <property type="match status" value="1"/>
</dbReference>
<reference evidence="6" key="1">
    <citation type="journal article" date="2009" name="Mol. Immunol.">
        <title>Alternaria alternata TCTP, a novel cross-reactive ascomycete allergen.</title>
        <authorList>
            <person name="Rid R."/>
            <person name="Onder K."/>
            <person name="MacDonald S."/>
            <person name="Lang R."/>
            <person name="Hawranek T."/>
            <person name="Ebner C."/>
            <person name="Hemmer W."/>
            <person name="Richter K."/>
            <person name="Simon-Nobbe B."/>
            <person name="Breitenbach M."/>
        </authorList>
    </citation>
    <scope>NUCLEOTIDE SEQUENCE [MRNA]</scope>
    <scope>3D-STRUCTURE MODELING</scope>
    <scope>ALLERGEN</scope>
    <scope>CIRCULAR DICHROISM ANALYSIS</scope>
    <source>
        <tissue evidence="4">Mycelium</tissue>
    </source>
</reference>
<keyword id="KW-0020">Allergen</keyword>
<keyword id="KW-0963">Cytoplasm</keyword>
<keyword id="KW-0206">Cytoskeleton</keyword>
<keyword id="KW-0493">Microtubule</keyword>
<keyword id="KW-0648">Protein biosynthesis</keyword>